<proteinExistence type="inferred from homology"/>
<gene>
    <name evidence="1" type="primary">grpE</name>
    <name type="ordered locus">SPD_0459</name>
</gene>
<sequence>MAQDIKNEEVEEVQEEEVVETAEETTPEKSELDLANERADEFENKYLRAHAEMQNIQRRANEERQNLQRYRSQDLAKAILPSLDNLERALAVEGLTDDVKKGLAMVQESLIHALKEEGIEEIAADGEFDHNYHMAIQTLPGDDEHPVDTIAQVFQKGYKLHDRILRPAMVVVYN</sequence>
<organism>
    <name type="scientific">Streptococcus pneumoniae serotype 2 (strain D39 / NCTC 7466)</name>
    <dbReference type="NCBI Taxonomy" id="373153"/>
    <lineage>
        <taxon>Bacteria</taxon>
        <taxon>Bacillati</taxon>
        <taxon>Bacillota</taxon>
        <taxon>Bacilli</taxon>
        <taxon>Lactobacillales</taxon>
        <taxon>Streptococcaceae</taxon>
        <taxon>Streptococcus</taxon>
    </lineage>
</organism>
<evidence type="ECO:0000255" key="1">
    <source>
        <dbReference type="HAMAP-Rule" id="MF_01151"/>
    </source>
</evidence>
<evidence type="ECO:0000256" key="2">
    <source>
        <dbReference type="SAM" id="MobiDB-lite"/>
    </source>
</evidence>
<reference key="1">
    <citation type="journal article" date="2007" name="J. Bacteriol.">
        <title>Genome sequence of Avery's virulent serotype 2 strain D39 of Streptococcus pneumoniae and comparison with that of unencapsulated laboratory strain R6.</title>
        <authorList>
            <person name="Lanie J.A."/>
            <person name="Ng W.-L."/>
            <person name="Kazmierczak K.M."/>
            <person name="Andrzejewski T.M."/>
            <person name="Davidsen T.M."/>
            <person name="Wayne K.J."/>
            <person name="Tettelin H."/>
            <person name="Glass J.I."/>
            <person name="Winkler M.E."/>
        </authorList>
    </citation>
    <scope>NUCLEOTIDE SEQUENCE [LARGE SCALE GENOMIC DNA]</scope>
    <source>
        <strain>D39 / NCTC 7466</strain>
    </source>
</reference>
<dbReference type="EMBL" id="CP000410">
    <property type="protein sequence ID" value="ABJ55365.1"/>
    <property type="molecule type" value="Genomic_DNA"/>
</dbReference>
<dbReference type="RefSeq" id="WP_000046028.1">
    <property type="nucleotide sequence ID" value="NZ_JAMLJR010000001.1"/>
</dbReference>
<dbReference type="SMR" id="Q04LY1"/>
<dbReference type="PaxDb" id="373153-SPD_0459"/>
<dbReference type="KEGG" id="spd:SPD_0459"/>
<dbReference type="eggNOG" id="COG0576">
    <property type="taxonomic scope" value="Bacteria"/>
</dbReference>
<dbReference type="HOGENOM" id="CLU_057217_6_3_9"/>
<dbReference type="BioCyc" id="SPNE373153:G1G6V-501-MONOMER"/>
<dbReference type="Proteomes" id="UP000001452">
    <property type="component" value="Chromosome"/>
</dbReference>
<dbReference type="GO" id="GO:0005737">
    <property type="term" value="C:cytoplasm"/>
    <property type="evidence" value="ECO:0007669"/>
    <property type="project" value="UniProtKB-SubCell"/>
</dbReference>
<dbReference type="GO" id="GO:0000774">
    <property type="term" value="F:adenyl-nucleotide exchange factor activity"/>
    <property type="evidence" value="ECO:0007669"/>
    <property type="project" value="InterPro"/>
</dbReference>
<dbReference type="GO" id="GO:0042803">
    <property type="term" value="F:protein homodimerization activity"/>
    <property type="evidence" value="ECO:0007669"/>
    <property type="project" value="InterPro"/>
</dbReference>
<dbReference type="GO" id="GO:0051087">
    <property type="term" value="F:protein-folding chaperone binding"/>
    <property type="evidence" value="ECO:0007669"/>
    <property type="project" value="InterPro"/>
</dbReference>
<dbReference type="GO" id="GO:0051082">
    <property type="term" value="F:unfolded protein binding"/>
    <property type="evidence" value="ECO:0007669"/>
    <property type="project" value="TreeGrafter"/>
</dbReference>
<dbReference type="GO" id="GO:0006457">
    <property type="term" value="P:protein folding"/>
    <property type="evidence" value="ECO:0007669"/>
    <property type="project" value="InterPro"/>
</dbReference>
<dbReference type="CDD" id="cd00446">
    <property type="entry name" value="GrpE"/>
    <property type="match status" value="1"/>
</dbReference>
<dbReference type="FunFam" id="2.30.22.10:FF:000004">
    <property type="entry name" value="Protein GrpE"/>
    <property type="match status" value="1"/>
</dbReference>
<dbReference type="FunFam" id="3.90.20.20:FF:000007">
    <property type="entry name" value="Protein GrpE"/>
    <property type="match status" value="1"/>
</dbReference>
<dbReference type="Gene3D" id="3.90.20.20">
    <property type="match status" value="1"/>
</dbReference>
<dbReference type="Gene3D" id="2.30.22.10">
    <property type="entry name" value="Head domain of nucleotide exchange factor GrpE"/>
    <property type="match status" value="1"/>
</dbReference>
<dbReference type="HAMAP" id="MF_01151">
    <property type="entry name" value="GrpE"/>
    <property type="match status" value="1"/>
</dbReference>
<dbReference type="InterPro" id="IPR000740">
    <property type="entry name" value="GrpE"/>
</dbReference>
<dbReference type="InterPro" id="IPR013805">
    <property type="entry name" value="GrpE_coiled_coil"/>
</dbReference>
<dbReference type="InterPro" id="IPR009012">
    <property type="entry name" value="GrpE_head"/>
</dbReference>
<dbReference type="NCBIfam" id="NF010738">
    <property type="entry name" value="PRK14140.1"/>
    <property type="match status" value="1"/>
</dbReference>
<dbReference type="NCBIfam" id="NF010753">
    <property type="entry name" value="PRK14156.1"/>
    <property type="match status" value="1"/>
</dbReference>
<dbReference type="PANTHER" id="PTHR21237">
    <property type="entry name" value="GRPE PROTEIN"/>
    <property type="match status" value="1"/>
</dbReference>
<dbReference type="PANTHER" id="PTHR21237:SF23">
    <property type="entry name" value="GRPE PROTEIN HOMOLOG, MITOCHONDRIAL"/>
    <property type="match status" value="1"/>
</dbReference>
<dbReference type="Pfam" id="PF01025">
    <property type="entry name" value="GrpE"/>
    <property type="match status" value="1"/>
</dbReference>
<dbReference type="PRINTS" id="PR00773">
    <property type="entry name" value="GRPEPROTEIN"/>
</dbReference>
<dbReference type="SUPFAM" id="SSF58014">
    <property type="entry name" value="Coiled-coil domain of nucleotide exchange factor GrpE"/>
    <property type="match status" value="1"/>
</dbReference>
<dbReference type="SUPFAM" id="SSF51064">
    <property type="entry name" value="Head domain of nucleotide exchange factor GrpE"/>
    <property type="match status" value="1"/>
</dbReference>
<dbReference type="PROSITE" id="PS01071">
    <property type="entry name" value="GRPE"/>
    <property type="match status" value="1"/>
</dbReference>
<name>GRPE_STRP2</name>
<comment type="function">
    <text evidence="1">Participates actively in the response to hyperosmotic and heat shock by preventing the aggregation of stress-denatured proteins, in association with DnaK and GrpE. It is the nucleotide exchange factor for DnaK and may function as a thermosensor. Unfolded proteins bind initially to DnaJ; upon interaction with the DnaJ-bound protein, DnaK hydrolyzes its bound ATP, resulting in the formation of a stable complex. GrpE releases ADP from DnaK; ATP binding to DnaK triggers the release of the substrate protein, thus completing the reaction cycle. Several rounds of ATP-dependent interactions between DnaJ, DnaK and GrpE are required for fully efficient folding.</text>
</comment>
<comment type="subunit">
    <text evidence="1">Homodimer.</text>
</comment>
<comment type="subcellular location">
    <subcellularLocation>
        <location evidence="1">Cytoplasm</location>
    </subcellularLocation>
</comment>
<comment type="similarity">
    <text evidence="1">Belongs to the GrpE family.</text>
</comment>
<accession>Q04LY1</accession>
<feature type="chain" id="PRO_1000053650" description="Protein GrpE">
    <location>
        <begin position="1"/>
        <end position="174"/>
    </location>
</feature>
<feature type="region of interest" description="Disordered" evidence="2">
    <location>
        <begin position="1"/>
        <end position="35"/>
    </location>
</feature>
<feature type="compositionally biased region" description="Acidic residues" evidence="2">
    <location>
        <begin position="9"/>
        <end position="25"/>
    </location>
</feature>
<feature type="compositionally biased region" description="Basic and acidic residues" evidence="2">
    <location>
        <begin position="26"/>
        <end position="35"/>
    </location>
</feature>
<keyword id="KW-0143">Chaperone</keyword>
<keyword id="KW-0963">Cytoplasm</keyword>
<keyword id="KW-1185">Reference proteome</keyword>
<keyword id="KW-0346">Stress response</keyword>
<protein>
    <recommendedName>
        <fullName evidence="1">Protein GrpE</fullName>
    </recommendedName>
    <alternativeName>
        <fullName evidence="1">HSP-70 cofactor</fullName>
    </alternativeName>
</protein>